<reference key="1">
    <citation type="journal article" date="2007" name="Nat. Biotechnol.">
        <title>Genome sequencing and analysis of the versatile cell factory Aspergillus niger CBS 513.88.</title>
        <authorList>
            <person name="Pel H.J."/>
            <person name="de Winde J.H."/>
            <person name="Archer D.B."/>
            <person name="Dyer P.S."/>
            <person name="Hofmann G."/>
            <person name="Schaap P.J."/>
            <person name="Turner G."/>
            <person name="de Vries R.P."/>
            <person name="Albang R."/>
            <person name="Albermann K."/>
            <person name="Andersen M.R."/>
            <person name="Bendtsen J.D."/>
            <person name="Benen J.A.E."/>
            <person name="van den Berg M."/>
            <person name="Breestraat S."/>
            <person name="Caddick M.X."/>
            <person name="Contreras R."/>
            <person name="Cornell M."/>
            <person name="Coutinho P.M."/>
            <person name="Danchin E.G.J."/>
            <person name="Debets A.J.M."/>
            <person name="Dekker P."/>
            <person name="van Dijck P.W.M."/>
            <person name="van Dijk A."/>
            <person name="Dijkhuizen L."/>
            <person name="Driessen A.J.M."/>
            <person name="d'Enfert C."/>
            <person name="Geysens S."/>
            <person name="Goosen C."/>
            <person name="Groot G.S.P."/>
            <person name="de Groot P.W.J."/>
            <person name="Guillemette T."/>
            <person name="Henrissat B."/>
            <person name="Herweijer M."/>
            <person name="van den Hombergh J.P.T.W."/>
            <person name="van den Hondel C.A.M.J.J."/>
            <person name="van der Heijden R.T.J.M."/>
            <person name="van der Kaaij R.M."/>
            <person name="Klis F.M."/>
            <person name="Kools H.J."/>
            <person name="Kubicek C.P."/>
            <person name="van Kuyk P.A."/>
            <person name="Lauber J."/>
            <person name="Lu X."/>
            <person name="van der Maarel M.J.E.C."/>
            <person name="Meulenberg R."/>
            <person name="Menke H."/>
            <person name="Mortimer M.A."/>
            <person name="Nielsen J."/>
            <person name="Oliver S.G."/>
            <person name="Olsthoorn M."/>
            <person name="Pal K."/>
            <person name="van Peij N.N.M.E."/>
            <person name="Ram A.F.J."/>
            <person name="Rinas U."/>
            <person name="Roubos J.A."/>
            <person name="Sagt C.M.J."/>
            <person name="Schmoll M."/>
            <person name="Sun J."/>
            <person name="Ussery D."/>
            <person name="Varga J."/>
            <person name="Vervecken W."/>
            <person name="van de Vondervoort P.J.J."/>
            <person name="Wedler H."/>
            <person name="Woesten H.A.B."/>
            <person name="Zeng A.-P."/>
            <person name="van Ooyen A.J.J."/>
            <person name="Visser J."/>
            <person name="Stam H."/>
        </authorList>
    </citation>
    <scope>NUCLEOTIDE SEQUENCE [LARGE SCALE GENOMIC DNA]</scope>
    <source>
        <strain>ATCC MYA-4892 / CBS 513.88 / FGSC A1513</strain>
    </source>
</reference>
<organism>
    <name type="scientific">Aspergillus niger (strain ATCC MYA-4892 / CBS 513.88 / FGSC A1513)</name>
    <dbReference type="NCBI Taxonomy" id="425011"/>
    <lineage>
        <taxon>Eukaryota</taxon>
        <taxon>Fungi</taxon>
        <taxon>Dikarya</taxon>
        <taxon>Ascomycota</taxon>
        <taxon>Pezizomycotina</taxon>
        <taxon>Eurotiomycetes</taxon>
        <taxon>Eurotiomycetidae</taxon>
        <taxon>Eurotiales</taxon>
        <taxon>Aspergillaceae</taxon>
        <taxon>Aspergillus</taxon>
        <taxon>Aspergillus subgen. Circumdati</taxon>
    </lineage>
</organism>
<sequence>MLSKTSLLSLLSLAAGVVNADFGITTNDDSYVINANSPNSLVFTVDRGSCDITSIVHYGTELQYSGKGSHIGSGLGTATVSATKSGDYIKVTCETDTLTQYMVVHDGDPIIHMATYITEEPSIGELRFIARLNSDVLPNEEPFGDVSNTADGEAIEGSDVFLVDGETRSKFYSSQRFIDDQRHCIAGDEHRVCMILNQYETSSGGPFHRDINSNNGGDYNSLYWYMNSGHVQLESYRMGLHGPYSMYFSRSGTPSTDIDTSFFADLDIEGYVAESGRGTVSGTASGADSSFDWVVHWYNDDAQYWTYTSSSGSFTSPAMKPGTYTMVYYQGEYVVATSEVTVSAGSSTSKDISGSVETGTTIFKIGDWDGQPTGFRNAENQLRMHPSDSRMSDWGPLTYTVGSSSLTDFPMAIFKSVNSPVTIKFTATSDQTGAATLRIGTTLSFAGGRPQATINDYEGSAPSAPTNLDSRGVTRGAYRGYGDVYDVSVPEGTIVEGENTITISVISGSSGDDFLSPNFLDAVFIIALVDN</sequence>
<proteinExistence type="inferred from homology"/>
<protein>
    <recommendedName>
        <fullName>Probable rhamnogalacturonate lyase A</fullName>
        <ecNumber>4.2.2.23</ecNumber>
    </recommendedName>
</protein>
<evidence type="ECO:0000250" key="1"/>
<evidence type="ECO:0000255" key="2"/>
<evidence type="ECO:0000305" key="3"/>
<keyword id="KW-0119">Carbohydrate metabolism</keyword>
<keyword id="KW-0961">Cell wall biogenesis/degradation</keyword>
<keyword id="KW-1015">Disulfide bond</keyword>
<keyword id="KW-0456">Lyase</keyword>
<keyword id="KW-0624">Polysaccharide degradation</keyword>
<keyword id="KW-1185">Reference proteome</keyword>
<keyword id="KW-0964">Secreted</keyword>
<keyword id="KW-0732">Signal</keyword>
<comment type="function">
    <text evidence="1">Pectinolytic enzymes consist of four classes of enzymes: pectin lyase, polygalacturonase, pectin methylesterase and rhamnogalacturonase. Degrades the rhamnogalacturonan I (RG-I) backbone of pectin (By similarity).</text>
</comment>
<comment type="catalytic activity">
    <reaction>
        <text>Endotype eliminative cleavage of L-alpha-rhamnopyranosyl-(1-&gt;4)-alpha-D-galactopyranosyluronic acid bonds of rhamnogalacturonan I domains in ramified hairy regions of pectin leaving L-rhamnopyranose at the reducing end and 4-deoxy-4,5-unsaturated D-galactopyranosyluronic acid at the non-reducing end.</text>
        <dbReference type="EC" id="4.2.2.23"/>
    </reaction>
</comment>
<comment type="subcellular location">
    <subcellularLocation>
        <location evidence="1">Secreted</location>
    </subcellularLocation>
</comment>
<comment type="similarity">
    <text evidence="3">Belongs to the polysaccharide lyase 4 family.</text>
</comment>
<comment type="sequence caution" evidence="3">
    <conflict type="erroneous gene model prediction">
        <sequence resource="EMBL-CDS" id="CAK46452"/>
    </conflict>
</comment>
<name>RGLA_ASPNC</name>
<feature type="signal peptide" evidence="2">
    <location>
        <begin position="1"/>
        <end position="20"/>
    </location>
</feature>
<feature type="chain" id="PRO_5000220898" description="Probable rhamnogalacturonate lyase A">
    <location>
        <begin position="21"/>
        <end position="531"/>
    </location>
</feature>
<feature type="disulfide bond" evidence="1">
    <location>
        <begin position="50"/>
        <end position="93"/>
    </location>
</feature>
<feature type="disulfide bond" evidence="1">
    <location>
        <begin position="184"/>
        <end position="193"/>
    </location>
</feature>
<dbReference type="EC" id="4.2.2.23"/>
<dbReference type="EMBL" id="AM270312">
    <property type="protein sequence ID" value="CAK46452.1"/>
    <property type="status" value="ALT_SEQ"/>
    <property type="molecule type" value="Genomic_DNA"/>
</dbReference>
<dbReference type="SMR" id="A2R2L1"/>
<dbReference type="CAZy" id="PL4">
    <property type="family name" value="Polysaccharide Lyase Family 4"/>
</dbReference>
<dbReference type="EnsemblFungi" id="CAK46452">
    <property type="protein sequence ID" value="CAK46452"/>
    <property type="gene ID" value="An14g01130"/>
</dbReference>
<dbReference type="Proteomes" id="UP000006706">
    <property type="component" value="Chromosome 1R"/>
</dbReference>
<dbReference type="GO" id="GO:0005576">
    <property type="term" value="C:extracellular region"/>
    <property type="evidence" value="ECO:0007669"/>
    <property type="project" value="UniProtKB-SubCell"/>
</dbReference>
<dbReference type="GO" id="GO:0030246">
    <property type="term" value="F:carbohydrate binding"/>
    <property type="evidence" value="ECO:0007669"/>
    <property type="project" value="InterPro"/>
</dbReference>
<dbReference type="GO" id="GO:0102210">
    <property type="term" value="F:rhamnogalacturonan endolyase activity"/>
    <property type="evidence" value="ECO:0007669"/>
    <property type="project" value="UniProtKB-EC"/>
</dbReference>
<dbReference type="GO" id="GO:0071555">
    <property type="term" value="P:cell wall organization"/>
    <property type="evidence" value="ECO:0007669"/>
    <property type="project" value="UniProtKB-KW"/>
</dbReference>
<dbReference type="GO" id="GO:0045490">
    <property type="term" value="P:pectin catabolic process"/>
    <property type="evidence" value="ECO:0007669"/>
    <property type="project" value="TreeGrafter"/>
</dbReference>
<dbReference type="CDD" id="cd10317">
    <property type="entry name" value="RGL4_C"/>
    <property type="match status" value="1"/>
</dbReference>
<dbReference type="CDD" id="cd10316">
    <property type="entry name" value="RGL4_M"/>
    <property type="match status" value="1"/>
</dbReference>
<dbReference type="CDD" id="cd10320">
    <property type="entry name" value="RGL4_N"/>
    <property type="match status" value="1"/>
</dbReference>
<dbReference type="FunFam" id="2.60.120.260:FF:000102">
    <property type="entry name" value="Rhamnogalacturonate lyase A"/>
    <property type="match status" value="1"/>
</dbReference>
<dbReference type="FunFam" id="2.60.40.1120:FF:000017">
    <property type="entry name" value="Rhamnogalacturonate lyase A"/>
    <property type="match status" value="1"/>
</dbReference>
<dbReference type="FunFam" id="2.70.98.10:FF:000020">
    <property type="entry name" value="Rhamnogalacturonate lyase A"/>
    <property type="match status" value="1"/>
</dbReference>
<dbReference type="Gene3D" id="2.70.98.10">
    <property type="match status" value="1"/>
</dbReference>
<dbReference type="Gene3D" id="2.60.40.1120">
    <property type="entry name" value="Carboxypeptidase-like, regulatory domain"/>
    <property type="match status" value="1"/>
</dbReference>
<dbReference type="Gene3D" id="2.60.120.260">
    <property type="entry name" value="Galactose-binding domain-like"/>
    <property type="match status" value="1"/>
</dbReference>
<dbReference type="InterPro" id="IPR013784">
    <property type="entry name" value="Carb-bd-like_fold"/>
</dbReference>
<dbReference type="InterPro" id="IPR011013">
    <property type="entry name" value="Gal_mutarotase_sf_dom"/>
</dbReference>
<dbReference type="InterPro" id="IPR008979">
    <property type="entry name" value="Galactose-bd-like_sf"/>
</dbReference>
<dbReference type="InterPro" id="IPR014718">
    <property type="entry name" value="GH-type_carb-bd"/>
</dbReference>
<dbReference type="InterPro" id="IPR029413">
    <property type="entry name" value="RG-lyase_II"/>
</dbReference>
<dbReference type="InterPro" id="IPR029411">
    <property type="entry name" value="RG-lyase_III"/>
</dbReference>
<dbReference type="InterPro" id="IPR016590">
    <property type="entry name" value="Rhamnogalacturonase_B"/>
</dbReference>
<dbReference type="InterPro" id="IPR015364">
    <property type="entry name" value="RhgB_N"/>
</dbReference>
<dbReference type="PANTHER" id="PTHR36574">
    <property type="entry name" value="RHAMNOGALACTURONATE LYASE-RELATED"/>
    <property type="match status" value="1"/>
</dbReference>
<dbReference type="PANTHER" id="PTHR36574:SF1">
    <property type="entry name" value="RHAMNOGALACTURONATE LYASE-RELATED"/>
    <property type="match status" value="1"/>
</dbReference>
<dbReference type="Pfam" id="PF14683">
    <property type="entry name" value="CBM-like"/>
    <property type="match status" value="1"/>
</dbReference>
<dbReference type="Pfam" id="PF14686">
    <property type="entry name" value="fn3_3"/>
    <property type="match status" value="1"/>
</dbReference>
<dbReference type="Pfam" id="PF09284">
    <property type="entry name" value="RhgB_N"/>
    <property type="match status" value="1"/>
</dbReference>
<dbReference type="PIRSF" id="PIRSF011794">
    <property type="entry name" value="Rhamnogalacturonase_B"/>
    <property type="match status" value="1"/>
</dbReference>
<dbReference type="SUPFAM" id="SSF74650">
    <property type="entry name" value="Galactose mutarotase-like"/>
    <property type="match status" value="1"/>
</dbReference>
<dbReference type="SUPFAM" id="SSF49785">
    <property type="entry name" value="Galactose-binding domain-like"/>
    <property type="match status" value="1"/>
</dbReference>
<dbReference type="SUPFAM" id="SSF49452">
    <property type="entry name" value="Starch-binding domain-like"/>
    <property type="match status" value="1"/>
</dbReference>
<gene>
    <name type="primary">rglA</name>
    <name type="ORF">An14g01130</name>
</gene>
<accession>A2R2L1</accession>